<organism>
    <name type="scientific">Escherichia fergusonii (strain ATCC 35469 / DSM 13698 / CCUG 18766 / IAM 14443 / JCM 21226 / LMG 7866 / NBRC 102419 / NCTC 12128 / CDC 0568-73)</name>
    <dbReference type="NCBI Taxonomy" id="585054"/>
    <lineage>
        <taxon>Bacteria</taxon>
        <taxon>Pseudomonadati</taxon>
        <taxon>Pseudomonadota</taxon>
        <taxon>Gammaproteobacteria</taxon>
        <taxon>Enterobacterales</taxon>
        <taxon>Enterobacteriaceae</taxon>
        <taxon>Escherichia</taxon>
    </lineage>
</organism>
<feature type="chain" id="PRO_1000185969" description="3-ketoacyl-CoA thiolase">
    <location>
        <begin position="1"/>
        <end position="436"/>
    </location>
</feature>
<feature type="active site" description="Acyl-thioester intermediate" evidence="1">
    <location>
        <position position="99"/>
    </location>
</feature>
<feature type="active site" description="Proton acceptor" evidence="1">
    <location>
        <position position="392"/>
    </location>
</feature>
<feature type="active site" description="Proton acceptor" evidence="1">
    <location>
        <position position="422"/>
    </location>
</feature>
<sequence length="436" mass="46307">MGQVLPLVTRQGDRIAIVSGLRTPFARQATAFHGIPAVDLGKMVVSELLARSEIPPAAIEQLVFGQVVQMPEAPNIAREIVLGTGMSVHTDAYSVSRACATSFQAVANVAESLMAGTIRAGIAGGADSSSVLPIGVSKKLARVLVDVNKARTLGQRLKLFSRLRLHDLLPVPPAVAEYSTGLRMGDTAEQMAKTYGITREQQDALAHRSHQRAAQAWSEGKLTNEVMTAYVPPYKAPLSEDNNIRGNSTLADYARLRPAFDRKHGTVTAANSTPLTDGAAAVIMMTESRAKELGLTPLGYLRSYAFTAIDVWQDMLLGPAWSTPLALDRAGLTLADLTLIDMHEAFAAQTLANVQLLGSERFARDVLGRAHATGEVDDSKFNVLGGSIAYGHPFAATGARMITQTLHELRRRGGGFGLVTACAAGGLGAAMVLEAE</sequence>
<dbReference type="EC" id="2.3.1.16" evidence="1"/>
<dbReference type="EMBL" id="CU928158">
    <property type="protein sequence ID" value="CAQ88358.1"/>
    <property type="molecule type" value="Genomic_DNA"/>
</dbReference>
<dbReference type="RefSeq" id="WP_000531982.1">
    <property type="nucleotide sequence ID" value="NC_011740.1"/>
</dbReference>
<dbReference type="SMR" id="B7LLC9"/>
<dbReference type="GeneID" id="75058117"/>
<dbReference type="KEGG" id="efe:EFER_0822"/>
<dbReference type="HOGENOM" id="CLU_031026_2_0_6"/>
<dbReference type="OrthoDB" id="8951704at2"/>
<dbReference type="UniPathway" id="UPA00659"/>
<dbReference type="Proteomes" id="UP000000745">
    <property type="component" value="Chromosome"/>
</dbReference>
<dbReference type="GO" id="GO:0005829">
    <property type="term" value="C:cytosol"/>
    <property type="evidence" value="ECO:0007669"/>
    <property type="project" value="TreeGrafter"/>
</dbReference>
<dbReference type="GO" id="GO:0003988">
    <property type="term" value="F:acetyl-CoA C-acyltransferase activity"/>
    <property type="evidence" value="ECO:0007669"/>
    <property type="project" value="UniProtKB-UniRule"/>
</dbReference>
<dbReference type="GO" id="GO:0006635">
    <property type="term" value="P:fatty acid beta-oxidation"/>
    <property type="evidence" value="ECO:0007669"/>
    <property type="project" value="UniProtKB-UniRule"/>
</dbReference>
<dbReference type="CDD" id="cd00751">
    <property type="entry name" value="thiolase"/>
    <property type="match status" value="1"/>
</dbReference>
<dbReference type="FunFam" id="3.40.47.10:FF:000011">
    <property type="entry name" value="3-ketoacyl-CoA thiolase"/>
    <property type="match status" value="1"/>
</dbReference>
<dbReference type="Gene3D" id="3.40.47.10">
    <property type="match status" value="1"/>
</dbReference>
<dbReference type="HAMAP" id="MF_01618">
    <property type="entry name" value="FadI"/>
    <property type="match status" value="1"/>
</dbReference>
<dbReference type="InterPro" id="IPR012806">
    <property type="entry name" value="Ac-CoA_C-AcTrfase_FadI"/>
</dbReference>
<dbReference type="InterPro" id="IPR002155">
    <property type="entry name" value="Thiolase"/>
</dbReference>
<dbReference type="InterPro" id="IPR016039">
    <property type="entry name" value="Thiolase-like"/>
</dbReference>
<dbReference type="InterPro" id="IPR020615">
    <property type="entry name" value="Thiolase_acyl_enz_int_AS"/>
</dbReference>
<dbReference type="InterPro" id="IPR020610">
    <property type="entry name" value="Thiolase_AS"/>
</dbReference>
<dbReference type="InterPro" id="IPR020617">
    <property type="entry name" value="Thiolase_C"/>
</dbReference>
<dbReference type="InterPro" id="IPR020613">
    <property type="entry name" value="Thiolase_CS"/>
</dbReference>
<dbReference type="InterPro" id="IPR020616">
    <property type="entry name" value="Thiolase_N"/>
</dbReference>
<dbReference type="NCBIfam" id="TIGR01930">
    <property type="entry name" value="AcCoA-C-Actrans"/>
    <property type="match status" value="1"/>
</dbReference>
<dbReference type="NCBIfam" id="TIGR02446">
    <property type="entry name" value="FadI"/>
    <property type="match status" value="1"/>
</dbReference>
<dbReference type="NCBIfam" id="NF006516">
    <property type="entry name" value="PRK08963.1"/>
    <property type="match status" value="1"/>
</dbReference>
<dbReference type="PANTHER" id="PTHR18919:SF107">
    <property type="entry name" value="ACETYL-COA ACETYLTRANSFERASE, CYTOSOLIC"/>
    <property type="match status" value="1"/>
</dbReference>
<dbReference type="PANTHER" id="PTHR18919">
    <property type="entry name" value="ACETYL-COA C-ACYLTRANSFERASE"/>
    <property type="match status" value="1"/>
</dbReference>
<dbReference type="Pfam" id="PF02803">
    <property type="entry name" value="Thiolase_C"/>
    <property type="match status" value="1"/>
</dbReference>
<dbReference type="Pfam" id="PF00108">
    <property type="entry name" value="Thiolase_N"/>
    <property type="match status" value="1"/>
</dbReference>
<dbReference type="PIRSF" id="PIRSF000429">
    <property type="entry name" value="Ac-CoA_Ac_transf"/>
    <property type="match status" value="1"/>
</dbReference>
<dbReference type="SUPFAM" id="SSF53901">
    <property type="entry name" value="Thiolase-like"/>
    <property type="match status" value="2"/>
</dbReference>
<dbReference type="PROSITE" id="PS00098">
    <property type="entry name" value="THIOLASE_1"/>
    <property type="match status" value="1"/>
</dbReference>
<dbReference type="PROSITE" id="PS00737">
    <property type="entry name" value="THIOLASE_2"/>
    <property type="match status" value="1"/>
</dbReference>
<dbReference type="PROSITE" id="PS00099">
    <property type="entry name" value="THIOLASE_3"/>
    <property type="match status" value="1"/>
</dbReference>
<name>FADI_ESCF3</name>
<proteinExistence type="inferred from homology"/>
<accession>B7LLC9</accession>
<gene>
    <name evidence="1" type="primary">fadI</name>
    <name type="ordered locus">EFER_0822</name>
</gene>
<evidence type="ECO:0000255" key="1">
    <source>
        <dbReference type="HAMAP-Rule" id="MF_01618"/>
    </source>
</evidence>
<protein>
    <recommendedName>
        <fullName evidence="1">3-ketoacyl-CoA thiolase</fullName>
        <ecNumber evidence="1">2.3.1.16</ecNumber>
    </recommendedName>
    <alternativeName>
        <fullName evidence="1">ACSs</fullName>
    </alternativeName>
    <alternativeName>
        <fullName evidence="1">Acetyl-CoA acyltransferase</fullName>
    </alternativeName>
    <alternativeName>
        <fullName evidence="1">Acyl-CoA ligase</fullName>
    </alternativeName>
    <alternativeName>
        <fullName evidence="1">Beta-ketothiolase</fullName>
    </alternativeName>
    <alternativeName>
        <fullName evidence="1">Fatty acid oxidation complex subunit beta</fullName>
    </alternativeName>
</protein>
<keyword id="KW-0012">Acyltransferase</keyword>
<keyword id="KW-0963">Cytoplasm</keyword>
<keyword id="KW-0276">Fatty acid metabolism</keyword>
<keyword id="KW-0442">Lipid degradation</keyword>
<keyword id="KW-0443">Lipid metabolism</keyword>
<keyword id="KW-0808">Transferase</keyword>
<comment type="function">
    <text evidence="1">Catalyzes the final step of fatty acid oxidation in which acetyl-CoA is released and the CoA ester of a fatty acid two carbons shorter is formed.</text>
</comment>
<comment type="catalytic activity">
    <reaction evidence="1">
        <text>an acyl-CoA + acetyl-CoA = a 3-oxoacyl-CoA + CoA</text>
        <dbReference type="Rhea" id="RHEA:21564"/>
        <dbReference type="ChEBI" id="CHEBI:57287"/>
        <dbReference type="ChEBI" id="CHEBI:57288"/>
        <dbReference type="ChEBI" id="CHEBI:58342"/>
        <dbReference type="ChEBI" id="CHEBI:90726"/>
        <dbReference type="EC" id="2.3.1.16"/>
    </reaction>
</comment>
<comment type="pathway">
    <text evidence="1">Lipid metabolism; fatty acid beta-oxidation.</text>
</comment>
<comment type="subunit">
    <text evidence="1">Heterotetramer of two alpha chains (FadJ) and two beta chains (FadI).</text>
</comment>
<comment type="subcellular location">
    <subcellularLocation>
        <location evidence="1">Cytoplasm</location>
    </subcellularLocation>
</comment>
<comment type="similarity">
    <text evidence="1">Belongs to the thiolase-like superfamily. Thiolase family.</text>
</comment>
<reference key="1">
    <citation type="journal article" date="2009" name="PLoS Genet.">
        <title>Organised genome dynamics in the Escherichia coli species results in highly diverse adaptive paths.</title>
        <authorList>
            <person name="Touchon M."/>
            <person name="Hoede C."/>
            <person name="Tenaillon O."/>
            <person name="Barbe V."/>
            <person name="Baeriswyl S."/>
            <person name="Bidet P."/>
            <person name="Bingen E."/>
            <person name="Bonacorsi S."/>
            <person name="Bouchier C."/>
            <person name="Bouvet O."/>
            <person name="Calteau A."/>
            <person name="Chiapello H."/>
            <person name="Clermont O."/>
            <person name="Cruveiller S."/>
            <person name="Danchin A."/>
            <person name="Diard M."/>
            <person name="Dossat C."/>
            <person name="Karoui M.E."/>
            <person name="Frapy E."/>
            <person name="Garry L."/>
            <person name="Ghigo J.M."/>
            <person name="Gilles A.M."/>
            <person name="Johnson J."/>
            <person name="Le Bouguenec C."/>
            <person name="Lescat M."/>
            <person name="Mangenot S."/>
            <person name="Martinez-Jehanne V."/>
            <person name="Matic I."/>
            <person name="Nassif X."/>
            <person name="Oztas S."/>
            <person name="Petit M.A."/>
            <person name="Pichon C."/>
            <person name="Rouy Z."/>
            <person name="Ruf C.S."/>
            <person name="Schneider D."/>
            <person name="Tourret J."/>
            <person name="Vacherie B."/>
            <person name="Vallenet D."/>
            <person name="Medigue C."/>
            <person name="Rocha E.P.C."/>
            <person name="Denamur E."/>
        </authorList>
    </citation>
    <scope>NUCLEOTIDE SEQUENCE [LARGE SCALE GENOMIC DNA]</scope>
    <source>
        <strain>ATCC 35469 / DSM 13698 / BCRC 15582 / CCUG 18766 / IAM 14443 / JCM 21226 / LMG 7866 / NBRC 102419 / NCTC 12128 / CDC 0568-73</strain>
    </source>
</reference>